<gene>
    <name evidence="6" type="primary">kdpE</name>
    <name type="ordered locus">SAOUHSC_02315</name>
</gene>
<feature type="chain" id="PRO_0000448707" description="Transcriptional regulatory protein KdpE">
    <location>
        <begin position="1"/>
        <end position="231"/>
    </location>
</feature>
<feature type="domain" description="Response regulatory" evidence="1">
    <location>
        <begin position="4"/>
        <end position="117"/>
    </location>
</feature>
<feature type="DNA-binding region" description="OmpR/PhoB-type" evidence="2">
    <location>
        <begin position="127"/>
        <end position="227"/>
    </location>
</feature>
<feature type="modified residue" description="4-aspartylphosphate" evidence="1">
    <location>
        <position position="53"/>
    </location>
</feature>
<name>KDPE_STAA8</name>
<proteinExistence type="evidence at protein level"/>
<keyword id="KW-0238">DNA-binding</keyword>
<keyword id="KW-0597">Phosphoprotein</keyword>
<keyword id="KW-1185">Reference proteome</keyword>
<keyword id="KW-0804">Transcription</keyword>
<keyword id="KW-0805">Transcription regulation</keyword>
<keyword id="KW-0902">Two-component regulatory system</keyword>
<sequence>MQSKILIIEDDHAITHLLDVALTLDYYNVTTADNATQAHFKIQIDKPDVILLDLGLPDKDGLCLISEIRQHTDIPIIVISARQEEQTIIQALDNGANDYMTKPFNVDELRARIRVIERIAKSHQETNIVFTNGLLSIDFGSKSVVINNQEVHLTPNEFSLLELLSNHKGKVLTYEMILKRIYGYVNKTEMPSLRVHMTSLRQKLSQCHEDAKDIIKTHPRIGYQMLQWKEK</sequence>
<dbReference type="EMBL" id="CP000253">
    <property type="protein sequence ID" value="ABD31349.1"/>
    <property type="molecule type" value="Genomic_DNA"/>
</dbReference>
<dbReference type="RefSeq" id="WP_001190841.1">
    <property type="nucleotide sequence ID" value="NZ_LS483365.1"/>
</dbReference>
<dbReference type="RefSeq" id="YP_500794.1">
    <property type="nucleotide sequence ID" value="NC_007795.1"/>
</dbReference>
<dbReference type="SMR" id="Q2FWH6"/>
<dbReference type="STRING" id="93061.SAOUHSC_02315"/>
<dbReference type="PaxDb" id="1280-SAXN108_2324"/>
<dbReference type="GeneID" id="3920940"/>
<dbReference type="KEGG" id="sao:SAOUHSC_02315"/>
<dbReference type="PATRIC" id="fig|93061.5.peg.2098"/>
<dbReference type="eggNOG" id="COG0745">
    <property type="taxonomic scope" value="Bacteria"/>
</dbReference>
<dbReference type="HOGENOM" id="CLU_000445_30_8_9"/>
<dbReference type="OrthoDB" id="9802426at2"/>
<dbReference type="Proteomes" id="UP000008816">
    <property type="component" value="Chromosome"/>
</dbReference>
<dbReference type="GO" id="GO:0005829">
    <property type="term" value="C:cytosol"/>
    <property type="evidence" value="ECO:0000318"/>
    <property type="project" value="GO_Central"/>
</dbReference>
<dbReference type="GO" id="GO:0032993">
    <property type="term" value="C:protein-DNA complex"/>
    <property type="evidence" value="ECO:0000318"/>
    <property type="project" value="GO_Central"/>
</dbReference>
<dbReference type="GO" id="GO:0000156">
    <property type="term" value="F:phosphorelay response regulator activity"/>
    <property type="evidence" value="ECO:0000318"/>
    <property type="project" value="GO_Central"/>
</dbReference>
<dbReference type="GO" id="GO:0000976">
    <property type="term" value="F:transcription cis-regulatory region binding"/>
    <property type="evidence" value="ECO:0000318"/>
    <property type="project" value="GO_Central"/>
</dbReference>
<dbReference type="GO" id="GO:0006355">
    <property type="term" value="P:regulation of DNA-templated transcription"/>
    <property type="evidence" value="ECO:0000318"/>
    <property type="project" value="GO_Central"/>
</dbReference>
<dbReference type="CDD" id="cd00383">
    <property type="entry name" value="trans_reg_C"/>
    <property type="match status" value="1"/>
</dbReference>
<dbReference type="FunFam" id="3.40.50.2300:FF:000194">
    <property type="entry name" value="Two-component system KDP operon response regulator KdpE"/>
    <property type="match status" value="1"/>
</dbReference>
<dbReference type="Gene3D" id="3.40.50.2300">
    <property type="match status" value="1"/>
</dbReference>
<dbReference type="Gene3D" id="1.10.10.10">
    <property type="entry name" value="Winged helix-like DNA-binding domain superfamily/Winged helix DNA-binding domain"/>
    <property type="match status" value="1"/>
</dbReference>
<dbReference type="InterPro" id="IPR011006">
    <property type="entry name" value="CheY-like_superfamily"/>
</dbReference>
<dbReference type="InterPro" id="IPR001867">
    <property type="entry name" value="OmpR/PhoB-type_DNA-bd"/>
</dbReference>
<dbReference type="InterPro" id="IPR001789">
    <property type="entry name" value="Sig_transdc_resp-reg_receiver"/>
</dbReference>
<dbReference type="InterPro" id="IPR039420">
    <property type="entry name" value="WalR-like"/>
</dbReference>
<dbReference type="InterPro" id="IPR036388">
    <property type="entry name" value="WH-like_DNA-bd_sf"/>
</dbReference>
<dbReference type="PANTHER" id="PTHR48111:SF50">
    <property type="entry name" value="KDP OPERON TRANSCRIPTIONAL REGULATORY PROTEIN KDPE"/>
    <property type="match status" value="1"/>
</dbReference>
<dbReference type="PANTHER" id="PTHR48111">
    <property type="entry name" value="REGULATOR OF RPOS"/>
    <property type="match status" value="1"/>
</dbReference>
<dbReference type="Pfam" id="PF00072">
    <property type="entry name" value="Response_reg"/>
    <property type="match status" value="1"/>
</dbReference>
<dbReference type="Pfam" id="PF00486">
    <property type="entry name" value="Trans_reg_C"/>
    <property type="match status" value="1"/>
</dbReference>
<dbReference type="SMART" id="SM00448">
    <property type="entry name" value="REC"/>
    <property type="match status" value="1"/>
</dbReference>
<dbReference type="SMART" id="SM00862">
    <property type="entry name" value="Trans_reg_C"/>
    <property type="match status" value="1"/>
</dbReference>
<dbReference type="SUPFAM" id="SSF52172">
    <property type="entry name" value="CheY-like"/>
    <property type="match status" value="1"/>
</dbReference>
<dbReference type="PROSITE" id="PS51755">
    <property type="entry name" value="OMPR_PHOB"/>
    <property type="match status" value="1"/>
</dbReference>
<dbReference type="PROSITE" id="PS50110">
    <property type="entry name" value="RESPONSE_REGULATORY"/>
    <property type="match status" value="1"/>
</dbReference>
<comment type="function">
    <text evidence="3 4 5">Member of the two-component regulatory system KdpD/KdpE that regulates the transcription of a series of virulence factors through sensing external K(+) concentrations. Also regulates capsular polysaccharide synthesis (PubMed:20498265). Upon phosphorylation by KpdD, functions as a transcriptional regulator by direct binding to promoter regions of target genes including spa, hla, aur and geh (PubMed:21422185). Represses the transcription of kdpFABC operon (PubMed:26195599).</text>
</comment>
<comment type="induction">
    <text evidence="4">By the Agr/RNAIII system.</text>
</comment>
<comment type="PTM">
    <text evidence="3">Phosphorylated by KdpD. Phosphorylation is required for transcriptional activity.</text>
</comment>
<comment type="disruption phenotype">
    <text evidence="3">Inactivation of kdpE results in decreased transcript level of cap.</text>
</comment>
<accession>Q2FWH6</accession>
<reference key="1">
    <citation type="book" date="2006" name="Gram positive pathogens, 2nd edition">
        <title>The Staphylococcus aureus NCTC 8325 genome.</title>
        <editorList>
            <person name="Fischetti V."/>
            <person name="Novick R."/>
            <person name="Ferretti J."/>
            <person name="Portnoy D."/>
            <person name="Rood J."/>
        </editorList>
        <authorList>
            <person name="Gillaspy A.F."/>
            <person name="Worrell V."/>
            <person name="Orvis J."/>
            <person name="Roe B.A."/>
            <person name="Dyer D.W."/>
            <person name="Iandolo J.J."/>
        </authorList>
    </citation>
    <scope>NUCLEOTIDE SEQUENCE [LARGE SCALE GENOMIC DNA]</scope>
    <source>
        <strain>NCTC 8325 / PS 47</strain>
    </source>
</reference>
<reference key="2">
    <citation type="journal article" date="2010" name="Infect. Immun.">
        <title>Staphylococcus aureus AI-2 quorum sensing associates with the KdpDE two-component system to regulate capsular polysaccharide synthesis and virulence.</title>
        <authorList>
            <person name="Zhao L."/>
            <person name="Xue T."/>
            <person name="Shang F."/>
            <person name="Sun H."/>
            <person name="Sun B."/>
        </authorList>
    </citation>
    <scope>FUNCTION</scope>
    <scope>PHOSPHORYLATION</scope>
    <scope>DISRUPTION PHENOTYPE</scope>
</reference>
<reference key="3">
    <citation type="journal article" date="2011" name="Infect. Immun.">
        <title>The Staphylococcus aureus KdpDE two-component system couples extracellular K+ sensing and Agr signaling to infection programming.</title>
        <authorList>
            <person name="Xue T."/>
            <person name="You Y."/>
            <person name="Hong D."/>
            <person name="Sun H."/>
            <person name="Sun B."/>
        </authorList>
    </citation>
    <scope>FUNCTION</scope>
    <scope>INDUCTION BY AGR</scope>
</reference>
<reference key="4">
    <citation type="journal article" date="2016" name="J. Bacteriol.">
        <title>Binding of Cyclic Di-AMP to the Staphylococcus aureus Sensor Kinase KdpD Occurs via the Universal Stress Protein Domain and Downregulates the Expression of the Kdp Potassium Transporter.</title>
        <authorList>
            <person name="Moscoso J.A."/>
            <person name="Schramke H."/>
            <person name="Zhang Y."/>
            <person name="Tosi T."/>
            <person name="Dehbi A."/>
            <person name="Jung K."/>
            <person name="Gruendling A."/>
        </authorList>
    </citation>
    <scope>FUNCTION</scope>
</reference>
<protein>
    <recommendedName>
        <fullName evidence="6">Transcriptional regulatory protein KdpE</fullName>
    </recommendedName>
</protein>
<evidence type="ECO:0000255" key="1">
    <source>
        <dbReference type="PROSITE-ProRule" id="PRU00169"/>
    </source>
</evidence>
<evidence type="ECO:0000255" key="2">
    <source>
        <dbReference type="PROSITE-ProRule" id="PRU01091"/>
    </source>
</evidence>
<evidence type="ECO:0000269" key="3">
    <source>
    </source>
</evidence>
<evidence type="ECO:0000269" key="4">
    <source>
    </source>
</evidence>
<evidence type="ECO:0000269" key="5">
    <source>
    </source>
</evidence>
<evidence type="ECO:0000303" key="6">
    <source>
    </source>
</evidence>
<organism>
    <name type="scientific">Staphylococcus aureus (strain NCTC 8325 / PS 47)</name>
    <dbReference type="NCBI Taxonomy" id="93061"/>
    <lineage>
        <taxon>Bacteria</taxon>
        <taxon>Bacillati</taxon>
        <taxon>Bacillota</taxon>
        <taxon>Bacilli</taxon>
        <taxon>Bacillales</taxon>
        <taxon>Staphylococcaceae</taxon>
        <taxon>Staphylococcus</taxon>
    </lineage>
</organism>